<organism>
    <name type="scientific">Cytophaga hutchinsonii (strain ATCC 33406 / DSM 1761 / CIP 103989 / NBRC 15051 / NCIMB 9469 / D465)</name>
    <dbReference type="NCBI Taxonomy" id="269798"/>
    <lineage>
        <taxon>Bacteria</taxon>
        <taxon>Pseudomonadati</taxon>
        <taxon>Bacteroidota</taxon>
        <taxon>Cytophagia</taxon>
        <taxon>Cytophagales</taxon>
        <taxon>Cytophagaceae</taxon>
        <taxon>Cytophaga</taxon>
    </lineage>
</organism>
<sequence length="342" mass="38129">MEIPVEFLLEKTIIVTAVFTISLVIAMYSTYAERKVSALLQDRIGPNRAGPFGLLQPLADGVKFFMKEEIIPSSANKALFILGPSIAMMTACLTGAVIPWGSYLEIGGDQIALQVTDINIGVLYIFAVVSIGVYGVMIGGWASNNKFSLMGAIRASSQMISYEIAMGLSIIALVMTTGTLSIGEIVQQQTTDWWNIVYQPLGFFIFMVCSFAECNRTPFDLPECEAELIGGYHTEYSSMKLGLYLFAEYINMFISSAVMSAFYFGGYDIPYIETLGLDQNTVTILGTLFFFTKIVLFIFLFMWVRWTLPRFRYDQLMNLGWKIMIPMAIINIIITGACILLF</sequence>
<accession>Q11VB9</accession>
<reference key="1">
    <citation type="journal article" date="2007" name="Appl. Environ. Microbiol.">
        <title>Genome sequence of the cellulolytic gliding bacterium Cytophaga hutchinsonii.</title>
        <authorList>
            <person name="Xie G."/>
            <person name="Bruce D.C."/>
            <person name="Challacombe J.F."/>
            <person name="Chertkov O."/>
            <person name="Detter J.C."/>
            <person name="Gilna P."/>
            <person name="Han C.S."/>
            <person name="Lucas S."/>
            <person name="Misra M."/>
            <person name="Myers G.L."/>
            <person name="Richardson P."/>
            <person name="Tapia R."/>
            <person name="Thayer N."/>
            <person name="Thompson L.S."/>
            <person name="Brettin T.S."/>
            <person name="Henrissat B."/>
            <person name="Wilson D.B."/>
            <person name="McBride M.J."/>
        </authorList>
    </citation>
    <scope>NUCLEOTIDE SEQUENCE [LARGE SCALE GENOMIC DNA]</scope>
    <source>
        <strain>ATCC 33406 / DSM 1761 / JCM 20678 / CIP 103989 / IAM 12607 / NBRC 15051 / NCIMB 9469 / D465</strain>
    </source>
</reference>
<proteinExistence type="inferred from homology"/>
<name>NUOH1_CYTH3</name>
<comment type="function">
    <text evidence="1">NDH-1 shuttles electrons from NADH, via FMN and iron-sulfur (Fe-S) centers, to quinones in the respiratory chain. The immediate electron acceptor for the enzyme in this species is believed to be ubiquinone. Couples the redox reaction to proton translocation (for every two electrons transferred, four hydrogen ions are translocated across the cytoplasmic membrane), and thus conserves the redox energy in a proton gradient. This subunit may bind ubiquinone.</text>
</comment>
<comment type="catalytic activity">
    <reaction evidence="1">
        <text>a quinone + NADH + 5 H(+)(in) = a quinol + NAD(+) + 4 H(+)(out)</text>
        <dbReference type="Rhea" id="RHEA:57888"/>
        <dbReference type="ChEBI" id="CHEBI:15378"/>
        <dbReference type="ChEBI" id="CHEBI:24646"/>
        <dbReference type="ChEBI" id="CHEBI:57540"/>
        <dbReference type="ChEBI" id="CHEBI:57945"/>
        <dbReference type="ChEBI" id="CHEBI:132124"/>
    </reaction>
</comment>
<comment type="subunit">
    <text evidence="1">NDH-1 is composed of 14 different subunits. Subunits NuoA, H, J, K, L, M, N constitute the membrane sector of the complex.</text>
</comment>
<comment type="subcellular location">
    <subcellularLocation>
        <location evidence="1">Cell inner membrane</location>
        <topology evidence="1">Multi-pass membrane protein</topology>
    </subcellularLocation>
</comment>
<comment type="similarity">
    <text evidence="1">Belongs to the complex I subunit 1 family.</text>
</comment>
<evidence type="ECO:0000255" key="1">
    <source>
        <dbReference type="HAMAP-Rule" id="MF_01350"/>
    </source>
</evidence>
<feature type="chain" id="PRO_0000299933" description="NADH-quinone oxidoreductase subunit H 1">
    <location>
        <begin position="1"/>
        <end position="342"/>
    </location>
</feature>
<feature type="transmembrane region" description="Helical" evidence="1">
    <location>
        <begin position="7"/>
        <end position="27"/>
    </location>
</feature>
<feature type="transmembrane region" description="Helical" evidence="1">
    <location>
        <begin position="78"/>
        <end position="98"/>
    </location>
</feature>
<feature type="transmembrane region" description="Helical" evidence="1">
    <location>
        <begin position="120"/>
        <end position="140"/>
    </location>
</feature>
<feature type="transmembrane region" description="Helical" evidence="1">
    <location>
        <begin position="166"/>
        <end position="186"/>
    </location>
</feature>
<feature type="transmembrane region" description="Helical" evidence="1">
    <location>
        <begin position="193"/>
        <end position="213"/>
    </location>
</feature>
<feature type="transmembrane region" description="Helical" evidence="1">
    <location>
        <begin position="245"/>
        <end position="265"/>
    </location>
</feature>
<feature type="transmembrane region" description="Helical" evidence="1">
    <location>
        <begin position="284"/>
        <end position="304"/>
    </location>
</feature>
<feature type="transmembrane region" description="Helical" evidence="1">
    <location>
        <begin position="322"/>
        <end position="342"/>
    </location>
</feature>
<dbReference type="EC" id="7.1.1.-" evidence="1"/>
<dbReference type="EMBL" id="CP000383">
    <property type="protein sequence ID" value="ABG58647.1"/>
    <property type="molecule type" value="Genomic_DNA"/>
</dbReference>
<dbReference type="RefSeq" id="WP_011584762.1">
    <property type="nucleotide sequence ID" value="NC_008255.1"/>
</dbReference>
<dbReference type="SMR" id="Q11VB9"/>
<dbReference type="STRING" id="269798.CHU_1375"/>
<dbReference type="KEGG" id="chu:CHU_1375"/>
<dbReference type="eggNOG" id="COG1005">
    <property type="taxonomic scope" value="Bacteria"/>
</dbReference>
<dbReference type="HOGENOM" id="CLU_015134_0_1_10"/>
<dbReference type="OrthoDB" id="9803734at2"/>
<dbReference type="Proteomes" id="UP000001822">
    <property type="component" value="Chromosome"/>
</dbReference>
<dbReference type="GO" id="GO:0005886">
    <property type="term" value="C:plasma membrane"/>
    <property type="evidence" value="ECO:0007669"/>
    <property type="project" value="UniProtKB-SubCell"/>
</dbReference>
<dbReference type="GO" id="GO:0003954">
    <property type="term" value="F:NADH dehydrogenase activity"/>
    <property type="evidence" value="ECO:0007669"/>
    <property type="project" value="TreeGrafter"/>
</dbReference>
<dbReference type="GO" id="GO:0016655">
    <property type="term" value="F:oxidoreductase activity, acting on NAD(P)H, quinone or similar compound as acceptor"/>
    <property type="evidence" value="ECO:0007669"/>
    <property type="project" value="UniProtKB-UniRule"/>
</dbReference>
<dbReference type="GO" id="GO:0048038">
    <property type="term" value="F:quinone binding"/>
    <property type="evidence" value="ECO:0007669"/>
    <property type="project" value="UniProtKB-KW"/>
</dbReference>
<dbReference type="GO" id="GO:0009060">
    <property type="term" value="P:aerobic respiration"/>
    <property type="evidence" value="ECO:0007669"/>
    <property type="project" value="TreeGrafter"/>
</dbReference>
<dbReference type="HAMAP" id="MF_01350">
    <property type="entry name" value="NDH1_NuoH"/>
    <property type="match status" value="1"/>
</dbReference>
<dbReference type="InterPro" id="IPR001694">
    <property type="entry name" value="NADH_UbQ_OxRdtase_su1/FPO"/>
</dbReference>
<dbReference type="InterPro" id="IPR018086">
    <property type="entry name" value="NADH_UbQ_OxRdtase_su1_CS"/>
</dbReference>
<dbReference type="NCBIfam" id="NF004741">
    <property type="entry name" value="PRK06076.1-2"/>
    <property type="match status" value="1"/>
</dbReference>
<dbReference type="PANTHER" id="PTHR11432">
    <property type="entry name" value="NADH DEHYDROGENASE SUBUNIT 1"/>
    <property type="match status" value="1"/>
</dbReference>
<dbReference type="PANTHER" id="PTHR11432:SF3">
    <property type="entry name" value="NADH-UBIQUINONE OXIDOREDUCTASE CHAIN 1"/>
    <property type="match status" value="1"/>
</dbReference>
<dbReference type="Pfam" id="PF00146">
    <property type="entry name" value="NADHdh"/>
    <property type="match status" value="1"/>
</dbReference>
<dbReference type="PROSITE" id="PS00668">
    <property type="entry name" value="COMPLEX1_ND1_2"/>
    <property type="match status" value="1"/>
</dbReference>
<protein>
    <recommendedName>
        <fullName evidence="1">NADH-quinone oxidoreductase subunit H 1</fullName>
        <ecNumber evidence="1">7.1.1.-</ecNumber>
    </recommendedName>
    <alternativeName>
        <fullName evidence="1">NADH dehydrogenase I subunit H 1</fullName>
    </alternativeName>
    <alternativeName>
        <fullName evidence="1">NDH-1 subunit H 1</fullName>
    </alternativeName>
</protein>
<gene>
    <name evidence="1" type="primary">nuoH1</name>
    <name type="ordered locus">CHU_1375</name>
</gene>
<keyword id="KW-0997">Cell inner membrane</keyword>
<keyword id="KW-1003">Cell membrane</keyword>
<keyword id="KW-0472">Membrane</keyword>
<keyword id="KW-0520">NAD</keyword>
<keyword id="KW-0874">Quinone</keyword>
<keyword id="KW-1185">Reference proteome</keyword>
<keyword id="KW-1278">Translocase</keyword>
<keyword id="KW-0812">Transmembrane</keyword>
<keyword id="KW-1133">Transmembrane helix</keyword>
<keyword id="KW-0830">Ubiquinone</keyword>